<reference key="1">
    <citation type="submission" date="2005-10" db="EMBL/GenBank/DDBJ databases">
        <title>Complete sequence of chromosome 1 of Burkholderia sp. 383.</title>
        <authorList>
            <consortium name="US DOE Joint Genome Institute"/>
            <person name="Copeland A."/>
            <person name="Lucas S."/>
            <person name="Lapidus A."/>
            <person name="Barry K."/>
            <person name="Detter J.C."/>
            <person name="Glavina T."/>
            <person name="Hammon N."/>
            <person name="Israni S."/>
            <person name="Pitluck S."/>
            <person name="Chain P."/>
            <person name="Malfatti S."/>
            <person name="Shin M."/>
            <person name="Vergez L."/>
            <person name="Schmutz J."/>
            <person name="Larimer F."/>
            <person name="Land M."/>
            <person name="Kyrpides N."/>
            <person name="Lykidis A."/>
            <person name="Richardson P."/>
        </authorList>
    </citation>
    <scope>NUCLEOTIDE SEQUENCE [LARGE SCALE GENOMIC DNA]</scope>
    <source>
        <strain>ATCC 17760 / DSM 23089 / LMG 22485 / NCIMB 9086 / R18194 / 383</strain>
    </source>
</reference>
<sequence>MDWILICKALILGVVEGLTEFLPVSSTGHLIVAGSFLNFNDSHAKTFDVVIQFGAILAVCWEYRQRIASIVSGLPSRPDARRFTLNVVIATIPAIALGLLFEKKIKAVLFSPVPVAFALVVGGAIILWAEARQRERREPPRVMSVDELTPLDALKVGIAQCFALIPGMSRSGSTIIGGMLFGLDRRVATEFSFFLAIPIIFGATLYETVKDWQAFTVDSLGLFVLGAVAAFVSAFVCVRWLLRYVASHDFTVFAWYRIAFGLFVLLVGYSGWLNWA</sequence>
<dbReference type="EC" id="3.6.1.27" evidence="1"/>
<dbReference type="EMBL" id="CP000151">
    <property type="protein sequence ID" value="ABB07618.1"/>
    <property type="molecule type" value="Genomic_DNA"/>
</dbReference>
<dbReference type="RefSeq" id="WP_011351199.1">
    <property type="nucleotide sequence ID" value="NZ_WNDV01000014.1"/>
</dbReference>
<dbReference type="SMR" id="Q39IU8"/>
<dbReference type="GeneID" id="45093920"/>
<dbReference type="KEGG" id="bur:Bcep18194_A4021"/>
<dbReference type="PATRIC" id="fig|482957.22.peg.901"/>
<dbReference type="HOGENOM" id="CLU_060296_2_0_4"/>
<dbReference type="Proteomes" id="UP000002705">
    <property type="component" value="Chromosome 1"/>
</dbReference>
<dbReference type="GO" id="GO:0005886">
    <property type="term" value="C:plasma membrane"/>
    <property type="evidence" value="ECO:0007669"/>
    <property type="project" value="UniProtKB-SubCell"/>
</dbReference>
<dbReference type="GO" id="GO:0050380">
    <property type="term" value="F:undecaprenyl-diphosphatase activity"/>
    <property type="evidence" value="ECO:0007669"/>
    <property type="project" value="UniProtKB-UniRule"/>
</dbReference>
<dbReference type="GO" id="GO:0071555">
    <property type="term" value="P:cell wall organization"/>
    <property type="evidence" value="ECO:0007669"/>
    <property type="project" value="UniProtKB-KW"/>
</dbReference>
<dbReference type="GO" id="GO:0009252">
    <property type="term" value="P:peptidoglycan biosynthetic process"/>
    <property type="evidence" value="ECO:0007669"/>
    <property type="project" value="UniProtKB-KW"/>
</dbReference>
<dbReference type="GO" id="GO:0008360">
    <property type="term" value="P:regulation of cell shape"/>
    <property type="evidence" value="ECO:0007669"/>
    <property type="project" value="UniProtKB-KW"/>
</dbReference>
<dbReference type="GO" id="GO:0046677">
    <property type="term" value="P:response to antibiotic"/>
    <property type="evidence" value="ECO:0007669"/>
    <property type="project" value="UniProtKB-UniRule"/>
</dbReference>
<dbReference type="HAMAP" id="MF_01006">
    <property type="entry name" value="Undec_diphosphatase"/>
    <property type="match status" value="1"/>
</dbReference>
<dbReference type="InterPro" id="IPR003824">
    <property type="entry name" value="UppP"/>
</dbReference>
<dbReference type="NCBIfam" id="NF001389">
    <property type="entry name" value="PRK00281.1-2"/>
    <property type="match status" value="1"/>
</dbReference>
<dbReference type="NCBIfam" id="NF001390">
    <property type="entry name" value="PRK00281.1-4"/>
    <property type="match status" value="1"/>
</dbReference>
<dbReference type="NCBIfam" id="TIGR00753">
    <property type="entry name" value="undec_PP_bacA"/>
    <property type="match status" value="1"/>
</dbReference>
<dbReference type="PANTHER" id="PTHR30622">
    <property type="entry name" value="UNDECAPRENYL-DIPHOSPHATASE"/>
    <property type="match status" value="1"/>
</dbReference>
<dbReference type="PANTHER" id="PTHR30622:SF3">
    <property type="entry name" value="UNDECAPRENYL-DIPHOSPHATASE"/>
    <property type="match status" value="1"/>
</dbReference>
<dbReference type="Pfam" id="PF02673">
    <property type="entry name" value="BacA"/>
    <property type="match status" value="1"/>
</dbReference>
<name>UPPP1_BURL3</name>
<gene>
    <name evidence="1" type="primary">uppP1</name>
    <name type="ordered locus">Bcep18194_A4021</name>
</gene>
<organism>
    <name type="scientific">Burkholderia lata (strain ATCC 17760 / DSM 23089 / LMG 22485 / NCIMB 9086 / R18194 / 383)</name>
    <dbReference type="NCBI Taxonomy" id="482957"/>
    <lineage>
        <taxon>Bacteria</taxon>
        <taxon>Pseudomonadati</taxon>
        <taxon>Pseudomonadota</taxon>
        <taxon>Betaproteobacteria</taxon>
        <taxon>Burkholderiales</taxon>
        <taxon>Burkholderiaceae</taxon>
        <taxon>Burkholderia</taxon>
        <taxon>Burkholderia cepacia complex</taxon>
    </lineage>
</organism>
<feature type="chain" id="PRO_0000227610" description="Undecaprenyl-diphosphatase 1">
    <location>
        <begin position="1"/>
        <end position="276"/>
    </location>
</feature>
<feature type="transmembrane region" description="Helical" evidence="1">
    <location>
        <begin position="4"/>
        <end position="24"/>
    </location>
</feature>
<feature type="transmembrane region" description="Helical" evidence="1">
    <location>
        <begin position="46"/>
        <end position="63"/>
    </location>
</feature>
<feature type="transmembrane region" description="Helical" evidence="1">
    <location>
        <begin position="83"/>
        <end position="103"/>
    </location>
</feature>
<feature type="transmembrane region" description="Helical" evidence="1">
    <location>
        <begin position="108"/>
        <end position="128"/>
    </location>
</feature>
<feature type="transmembrane region" description="Helical" evidence="1">
    <location>
        <begin position="187"/>
        <end position="207"/>
    </location>
</feature>
<feature type="transmembrane region" description="Helical" evidence="1">
    <location>
        <begin position="217"/>
        <end position="237"/>
    </location>
</feature>
<feature type="transmembrane region" description="Helical" evidence="1">
    <location>
        <begin position="252"/>
        <end position="272"/>
    </location>
</feature>
<proteinExistence type="inferred from homology"/>
<evidence type="ECO:0000255" key="1">
    <source>
        <dbReference type="HAMAP-Rule" id="MF_01006"/>
    </source>
</evidence>
<keyword id="KW-0046">Antibiotic resistance</keyword>
<keyword id="KW-0997">Cell inner membrane</keyword>
<keyword id="KW-1003">Cell membrane</keyword>
<keyword id="KW-0133">Cell shape</keyword>
<keyword id="KW-0961">Cell wall biogenesis/degradation</keyword>
<keyword id="KW-0378">Hydrolase</keyword>
<keyword id="KW-0472">Membrane</keyword>
<keyword id="KW-0573">Peptidoglycan synthesis</keyword>
<keyword id="KW-0812">Transmembrane</keyword>
<keyword id="KW-1133">Transmembrane helix</keyword>
<protein>
    <recommendedName>
        <fullName evidence="1">Undecaprenyl-diphosphatase 1</fullName>
        <ecNumber evidence="1">3.6.1.27</ecNumber>
    </recommendedName>
    <alternativeName>
        <fullName evidence="1">Bacitracin resistance protein 1</fullName>
    </alternativeName>
    <alternativeName>
        <fullName evidence="1">Undecaprenyl pyrophosphate phosphatase 1</fullName>
    </alternativeName>
</protein>
<comment type="function">
    <text evidence="1">Catalyzes the dephosphorylation of undecaprenyl diphosphate (UPP). Confers resistance to bacitracin.</text>
</comment>
<comment type="catalytic activity">
    <reaction evidence="1">
        <text>di-trans,octa-cis-undecaprenyl diphosphate + H2O = di-trans,octa-cis-undecaprenyl phosphate + phosphate + H(+)</text>
        <dbReference type="Rhea" id="RHEA:28094"/>
        <dbReference type="ChEBI" id="CHEBI:15377"/>
        <dbReference type="ChEBI" id="CHEBI:15378"/>
        <dbReference type="ChEBI" id="CHEBI:43474"/>
        <dbReference type="ChEBI" id="CHEBI:58405"/>
        <dbReference type="ChEBI" id="CHEBI:60392"/>
        <dbReference type="EC" id="3.6.1.27"/>
    </reaction>
</comment>
<comment type="subcellular location">
    <subcellularLocation>
        <location evidence="1">Cell inner membrane</location>
        <topology evidence="1">Multi-pass membrane protein</topology>
    </subcellularLocation>
</comment>
<comment type="miscellaneous">
    <text>Bacitracin is thought to be involved in the inhibition of peptidoglycan synthesis by sequestering undecaprenyl diphosphate, thereby reducing the pool of lipid carrier available.</text>
</comment>
<comment type="similarity">
    <text evidence="1">Belongs to the UppP family.</text>
</comment>
<accession>Q39IU8</accession>